<gene>
    <name evidence="1" type="primary">argG</name>
    <name type="ordered locus">CYB_1752</name>
</gene>
<protein>
    <recommendedName>
        <fullName evidence="1">Argininosuccinate synthase</fullName>
        <ecNumber evidence="1">6.3.4.5</ecNumber>
    </recommendedName>
    <alternativeName>
        <fullName evidence="1">Citrulline--aspartate ligase</fullName>
    </alternativeName>
</protein>
<keyword id="KW-0028">Amino-acid biosynthesis</keyword>
<keyword id="KW-0055">Arginine biosynthesis</keyword>
<keyword id="KW-0067">ATP-binding</keyword>
<keyword id="KW-0963">Cytoplasm</keyword>
<keyword id="KW-0436">Ligase</keyword>
<keyword id="KW-0547">Nucleotide-binding</keyword>
<keyword id="KW-1185">Reference proteome</keyword>
<reference key="1">
    <citation type="journal article" date="2007" name="ISME J.">
        <title>Population level functional diversity in a microbial community revealed by comparative genomic and metagenomic analyses.</title>
        <authorList>
            <person name="Bhaya D."/>
            <person name="Grossman A.R."/>
            <person name="Steunou A.-S."/>
            <person name="Khuri N."/>
            <person name="Cohan F.M."/>
            <person name="Hamamura N."/>
            <person name="Melendrez M.C."/>
            <person name="Bateson M.M."/>
            <person name="Ward D.M."/>
            <person name="Heidelberg J.F."/>
        </authorList>
    </citation>
    <scope>NUCLEOTIDE SEQUENCE [LARGE SCALE GENOMIC DNA]</scope>
    <source>
        <strain>JA-2-3B'a(2-13)</strain>
    </source>
</reference>
<evidence type="ECO:0000255" key="1">
    <source>
        <dbReference type="HAMAP-Rule" id="MF_00005"/>
    </source>
</evidence>
<name>ASSY_SYNJB</name>
<feature type="chain" id="PRO_0000263984" description="Argininosuccinate synthase">
    <location>
        <begin position="1"/>
        <end position="400"/>
    </location>
</feature>
<feature type="binding site" evidence="1">
    <location>
        <begin position="10"/>
        <end position="18"/>
    </location>
    <ligand>
        <name>ATP</name>
        <dbReference type="ChEBI" id="CHEBI:30616"/>
    </ligand>
</feature>
<feature type="binding site" evidence="1">
    <location>
        <position position="89"/>
    </location>
    <ligand>
        <name>L-citrulline</name>
        <dbReference type="ChEBI" id="CHEBI:57743"/>
    </ligand>
</feature>
<feature type="binding site" evidence="1">
    <location>
        <position position="119"/>
    </location>
    <ligand>
        <name>ATP</name>
        <dbReference type="ChEBI" id="CHEBI:30616"/>
    </ligand>
</feature>
<feature type="binding site" evidence="1">
    <location>
        <position position="121"/>
    </location>
    <ligand>
        <name>L-aspartate</name>
        <dbReference type="ChEBI" id="CHEBI:29991"/>
    </ligand>
</feature>
<feature type="binding site" evidence="1">
    <location>
        <position position="125"/>
    </location>
    <ligand>
        <name>L-aspartate</name>
        <dbReference type="ChEBI" id="CHEBI:29991"/>
    </ligand>
</feature>
<feature type="binding site" evidence="1">
    <location>
        <position position="125"/>
    </location>
    <ligand>
        <name>L-citrulline</name>
        <dbReference type="ChEBI" id="CHEBI:57743"/>
    </ligand>
</feature>
<feature type="binding site" evidence="1">
    <location>
        <position position="126"/>
    </location>
    <ligand>
        <name>L-aspartate</name>
        <dbReference type="ChEBI" id="CHEBI:29991"/>
    </ligand>
</feature>
<feature type="binding site" evidence="1">
    <location>
        <position position="129"/>
    </location>
    <ligand>
        <name>L-citrulline</name>
        <dbReference type="ChEBI" id="CHEBI:57743"/>
    </ligand>
</feature>
<feature type="binding site" evidence="1">
    <location>
        <position position="177"/>
    </location>
    <ligand>
        <name>L-citrulline</name>
        <dbReference type="ChEBI" id="CHEBI:57743"/>
    </ligand>
</feature>
<feature type="binding site" evidence="1">
    <location>
        <position position="186"/>
    </location>
    <ligand>
        <name>L-citrulline</name>
        <dbReference type="ChEBI" id="CHEBI:57743"/>
    </ligand>
</feature>
<feature type="binding site" evidence="1">
    <location>
        <position position="262"/>
    </location>
    <ligand>
        <name>L-citrulline</name>
        <dbReference type="ChEBI" id="CHEBI:57743"/>
    </ligand>
</feature>
<feature type="binding site" evidence="1">
    <location>
        <position position="274"/>
    </location>
    <ligand>
        <name>L-citrulline</name>
        <dbReference type="ChEBI" id="CHEBI:57743"/>
    </ligand>
</feature>
<proteinExistence type="inferred from homology"/>
<comment type="catalytic activity">
    <reaction evidence="1">
        <text>L-citrulline + L-aspartate + ATP = 2-(N(omega)-L-arginino)succinate + AMP + diphosphate + H(+)</text>
        <dbReference type="Rhea" id="RHEA:10932"/>
        <dbReference type="ChEBI" id="CHEBI:15378"/>
        <dbReference type="ChEBI" id="CHEBI:29991"/>
        <dbReference type="ChEBI" id="CHEBI:30616"/>
        <dbReference type="ChEBI" id="CHEBI:33019"/>
        <dbReference type="ChEBI" id="CHEBI:57472"/>
        <dbReference type="ChEBI" id="CHEBI:57743"/>
        <dbReference type="ChEBI" id="CHEBI:456215"/>
        <dbReference type="EC" id="6.3.4.5"/>
    </reaction>
</comment>
<comment type="pathway">
    <text evidence="1">Amino-acid biosynthesis; L-arginine biosynthesis; L-arginine from L-ornithine and carbamoyl phosphate: step 2/3.</text>
</comment>
<comment type="subunit">
    <text evidence="1">Homotetramer.</text>
</comment>
<comment type="subcellular location">
    <subcellularLocation>
        <location evidence="1">Cytoplasm</location>
    </subcellularLocation>
</comment>
<comment type="similarity">
    <text evidence="1">Belongs to the argininosuccinate synthase family. Type 1 subfamily.</text>
</comment>
<dbReference type="EC" id="6.3.4.5" evidence="1"/>
<dbReference type="EMBL" id="CP000240">
    <property type="protein sequence ID" value="ABD02709.1"/>
    <property type="molecule type" value="Genomic_DNA"/>
</dbReference>
<dbReference type="RefSeq" id="WP_011433352.1">
    <property type="nucleotide sequence ID" value="NC_007776.1"/>
</dbReference>
<dbReference type="SMR" id="Q2JKS2"/>
<dbReference type="STRING" id="321332.CYB_1752"/>
<dbReference type="KEGG" id="cyb:CYB_1752"/>
<dbReference type="eggNOG" id="COG0137">
    <property type="taxonomic scope" value="Bacteria"/>
</dbReference>
<dbReference type="HOGENOM" id="CLU_032784_4_2_3"/>
<dbReference type="OrthoDB" id="9801641at2"/>
<dbReference type="UniPathway" id="UPA00068">
    <property type="reaction ID" value="UER00113"/>
</dbReference>
<dbReference type="Proteomes" id="UP000001938">
    <property type="component" value="Chromosome"/>
</dbReference>
<dbReference type="GO" id="GO:0005737">
    <property type="term" value="C:cytoplasm"/>
    <property type="evidence" value="ECO:0007669"/>
    <property type="project" value="UniProtKB-SubCell"/>
</dbReference>
<dbReference type="GO" id="GO:0004055">
    <property type="term" value="F:argininosuccinate synthase activity"/>
    <property type="evidence" value="ECO:0007669"/>
    <property type="project" value="UniProtKB-UniRule"/>
</dbReference>
<dbReference type="GO" id="GO:0005524">
    <property type="term" value="F:ATP binding"/>
    <property type="evidence" value="ECO:0007669"/>
    <property type="project" value="UniProtKB-UniRule"/>
</dbReference>
<dbReference type="GO" id="GO:0000053">
    <property type="term" value="P:argininosuccinate metabolic process"/>
    <property type="evidence" value="ECO:0007669"/>
    <property type="project" value="TreeGrafter"/>
</dbReference>
<dbReference type="GO" id="GO:0006526">
    <property type="term" value="P:L-arginine biosynthetic process"/>
    <property type="evidence" value="ECO:0007669"/>
    <property type="project" value="UniProtKB-UniRule"/>
</dbReference>
<dbReference type="GO" id="GO:0000050">
    <property type="term" value="P:urea cycle"/>
    <property type="evidence" value="ECO:0007669"/>
    <property type="project" value="TreeGrafter"/>
</dbReference>
<dbReference type="CDD" id="cd01999">
    <property type="entry name" value="ASS"/>
    <property type="match status" value="1"/>
</dbReference>
<dbReference type="FunFam" id="1.20.5.470:FF:000002">
    <property type="entry name" value="Argininosuccinate synthase"/>
    <property type="match status" value="1"/>
</dbReference>
<dbReference type="FunFam" id="3.40.50.620:FF:000019">
    <property type="entry name" value="Argininosuccinate synthase"/>
    <property type="match status" value="1"/>
</dbReference>
<dbReference type="FunFam" id="3.90.1260.10:FF:000007">
    <property type="entry name" value="Argininosuccinate synthase"/>
    <property type="match status" value="1"/>
</dbReference>
<dbReference type="Gene3D" id="3.90.1260.10">
    <property type="entry name" value="Argininosuccinate synthetase, chain A, domain 2"/>
    <property type="match status" value="1"/>
</dbReference>
<dbReference type="Gene3D" id="3.40.50.620">
    <property type="entry name" value="HUPs"/>
    <property type="match status" value="1"/>
</dbReference>
<dbReference type="Gene3D" id="1.20.5.470">
    <property type="entry name" value="Single helix bin"/>
    <property type="match status" value="1"/>
</dbReference>
<dbReference type="HAMAP" id="MF_00005">
    <property type="entry name" value="Arg_succ_synth_type1"/>
    <property type="match status" value="1"/>
</dbReference>
<dbReference type="InterPro" id="IPR048268">
    <property type="entry name" value="Arginosuc_syn_C"/>
</dbReference>
<dbReference type="InterPro" id="IPR048267">
    <property type="entry name" value="Arginosuc_syn_N"/>
</dbReference>
<dbReference type="InterPro" id="IPR001518">
    <property type="entry name" value="Arginosuc_synth"/>
</dbReference>
<dbReference type="InterPro" id="IPR018223">
    <property type="entry name" value="Arginosuc_synth_CS"/>
</dbReference>
<dbReference type="InterPro" id="IPR023434">
    <property type="entry name" value="Arginosuc_synth_type_1_subfam"/>
</dbReference>
<dbReference type="InterPro" id="IPR024074">
    <property type="entry name" value="AS_cat/multimer_dom_body"/>
</dbReference>
<dbReference type="InterPro" id="IPR014729">
    <property type="entry name" value="Rossmann-like_a/b/a_fold"/>
</dbReference>
<dbReference type="NCBIfam" id="TIGR00032">
    <property type="entry name" value="argG"/>
    <property type="match status" value="1"/>
</dbReference>
<dbReference type="NCBIfam" id="NF001770">
    <property type="entry name" value="PRK00509.1"/>
    <property type="match status" value="1"/>
</dbReference>
<dbReference type="PANTHER" id="PTHR11587">
    <property type="entry name" value="ARGININOSUCCINATE SYNTHASE"/>
    <property type="match status" value="1"/>
</dbReference>
<dbReference type="PANTHER" id="PTHR11587:SF2">
    <property type="entry name" value="ARGININOSUCCINATE SYNTHASE"/>
    <property type="match status" value="1"/>
</dbReference>
<dbReference type="Pfam" id="PF20979">
    <property type="entry name" value="Arginosuc_syn_C"/>
    <property type="match status" value="1"/>
</dbReference>
<dbReference type="Pfam" id="PF00764">
    <property type="entry name" value="Arginosuc_synth"/>
    <property type="match status" value="1"/>
</dbReference>
<dbReference type="SUPFAM" id="SSF52402">
    <property type="entry name" value="Adenine nucleotide alpha hydrolases-like"/>
    <property type="match status" value="1"/>
</dbReference>
<dbReference type="SUPFAM" id="SSF69864">
    <property type="entry name" value="Argininosuccinate synthetase, C-terminal domain"/>
    <property type="match status" value="1"/>
</dbReference>
<dbReference type="PROSITE" id="PS00564">
    <property type="entry name" value="ARGININOSUCCIN_SYN_1"/>
    <property type="match status" value="1"/>
</dbReference>
<dbReference type="PROSITE" id="PS00565">
    <property type="entry name" value="ARGININOSUCCIN_SYN_2"/>
    <property type="match status" value="1"/>
</dbReference>
<sequence length="400" mass="44090">MGRAKKVVLAYSGGVDTSVCIPYLKHEWGVESVVALAVDLGQGAELEAIQAKALRAGAEQSLVREAVQALITDYAFPAIQANALYEQRYPLSTALARPLIAKLLVEVAEEVGADAVAHGCTGKGNDQVRFDLAIAALNPQLKVLAPAREWGMTREETIAYGERYGIPMPVQKSSPYSIDLNILGRSAEAGILEDADREPPEEVYALTRPISQTPDEPAYVEIEFEQGIPVGLDGQRLGPKALFEQLNSLAGLHGVGRIDMIENRLVGIKSREIYECPALMVLIQAHRELESLTLTRDVIHYKYGIETTYSQLIYNGLWYSPLREALDAFIRATQKSVTGVVRMRLHKGQAVCVGRRSPYSLYNPELATYGEGDQFDHRAAEGFIYIWGLPTRVWAQVHRG</sequence>
<organism>
    <name type="scientific">Synechococcus sp. (strain JA-2-3B'a(2-13))</name>
    <name type="common">Cyanobacteria bacterium Yellowstone B-Prime</name>
    <dbReference type="NCBI Taxonomy" id="321332"/>
    <lineage>
        <taxon>Bacteria</taxon>
        <taxon>Bacillati</taxon>
        <taxon>Cyanobacteriota</taxon>
        <taxon>Cyanophyceae</taxon>
        <taxon>Synechococcales</taxon>
        <taxon>Synechococcaceae</taxon>
        <taxon>Synechococcus</taxon>
    </lineage>
</organism>
<accession>Q2JKS2</accession>